<accession>Q0ABH5</accession>
<gene>
    <name evidence="1" type="primary">rplC</name>
    <name type="ordered locus">Mlg_0458</name>
</gene>
<name>RL3_ALKEH</name>
<comment type="function">
    <text evidence="1">One of the primary rRNA binding proteins, it binds directly near the 3'-end of the 23S rRNA, where it nucleates assembly of the 50S subunit.</text>
</comment>
<comment type="subunit">
    <text evidence="1">Part of the 50S ribosomal subunit. Forms a cluster with proteins L14 and L19.</text>
</comment>
<comment type="PTM">
    <text evidence="1">Methylated by PrmB.</text>
</comment>
<comment type="similarity">
    <text evidence="1">Belongs to the universal ribosomal protein uL3 family.</text>
</comment>
<evidence type="ECO:0000255" key="1">
    <source>
        <dbReference type="HAMAP-Rule" id="MF_01325"/>
    </source>
</evidence>
<evidence type="ECO:0000305" key="2"/>
<reference key="1">
    <citation type="submission" date="2006-08" db="EMBL/GenBank/DDBJ databases">
        <title>Complete sequence of Alkalilimnicola ehrilichei MLHE-1.</title>
        <authorList>
            <person name="Copeland A."/>
            <person name="Lucas S."/>
            <person name="Lapidus A."/>
            <person name="Barry K."/>
            <person name="Detter J.C."/>
            <person name="Glavina del Rio T."/>
            <person name="Hammon N."/>
            <person name="Israni S."/>
            <person name="Dalin E."/>
            <person name="Tice H."/>
            <person name="Pitluck S."/>
            <person name="Sims D."/>
            <person name="Brettin T."/>
            <person name="Bruce D."/>
            <person name="Han C."/>
            <person name="Tapia R."/>
            <person name="Gilna P."/>
            <person name="Schmutz J."/>
            <person name="Larimer F."/>
            <person name="Land M."/>
            <person name="Hauser L."/>
            <person name="Kyrpides N."/>
            <person name="Mikhailova N."/>
            <person name="Oremland R.S."/>
            <person name="Hoeft S.E."/>
            <person name="Switzer-Blum J."/>
            <person name="Kulp T."/>
            <person name="King G."/>
            <person name="Tabita R."/>
            <person name="Witte B."/>
            <person name="Santini J.M."/>
            <person name="Basu P."/>
            <person name="Hollibaugh J.T."/>
            <person name="Xie G."/>
            <person name="Stolz J.F."/>
            <person name="Richardson P."/>
        </authorList>
    </citation>
    <scope>NUCLEOTIDE SEQUENCE [LARGE SCALE GENOMIC DNA]</scope>
    <source>
        <strain>ATCC BAA-1101 / DSM 17681 / MLHE-1</strain>
    </source>
</reference>
<sequence>MSIGIVGRKAGMTRVFTEDGASVPVTVIEASPNRVTQVRTPERDGYSGVQVTAGSRRPNRVSKPMAGHFAAAGVDAGRGVWEFRVSDGQAIELEAGKELTVETFEAGQVVDITGTSKGKGFAGTVKRHNFRTQDATHGNSLAHRAPGSIGQNQTPGRVFKGKKMAGQMGNKRSTVKNLEVVRVDAERHLLLVRGSVPGAVGSDVIVRPARNQRKKGDS</sequence>
<keyword id="KW-0488">Methylation</keyword>
<keyword id="KW-1185">Reference proteome</keyword>
<keyword id="KW-0687">Ribonucleoprotein</keyword>
<keyword id="KW-0689">Ribosomal protein</keyword>
<keyword id="KW-0694">RNA-binding</keyword>
<keyword id="KW-0699">rRNA-binding</keyword>
<organism>
    <name type="scientific">Alkalilimnicola ehrlichii (strain ATCC BAA-1101 / DSM 17681 / MLHE-1)</name>
    <dbReference type="NCBI Taxonomy" id="187272"/>
    <lineage>
        <taxon>Bacteria</taxon>
        <taxon>Pseudomonadati</taxon>
        <taxon>Pseudomonadota</taxon>
        <taxon>Gammaproteobacteria</taxon>
        <taxon>Chromatiales</taxon>
        <taxon>Ectothiorhodospiraceae</taxon>
        <taxon>Alkalilimnicola</taxon>
    </lineage>
</organism>
<protein>
    <recommendedName>
        <fullName evidence="1">Large ribosomal subunit protein uL3</fullName>
    </recommendedName>
    <alternativeName>
        <fullName evidence="2">50S ribosomal protein L3</fullName>
    </alternativeName>
</protein>
<proteinExistence type="inferred from homology"/>
<feature type="chain" id="PRO_1000052006" description="Large ribosomal subunit protein uL3">
    <location>
        <begin position="1"/>
        <end position="218"/>
    </location>
</feature>
<feature type="modified residue" description="N5-methylglutamine" evidence="1">
    <location>
        <position position="153"/>
    </location>
</feature>
<dbReference type="EMBL" id="CP000453">
    <property type="protein sequence ID" value="ABI55812.1"/>
    <property type="molecule type" value="Genomic_DNA"/>
</dbReference>
<dbReference type="RefSeq" id="WP_011628207.1">
    <property type="nucleotide sequence ID" value="NC_008340.1"/>
</dbReference>
<dbReference type="SMR" id="Q0ABH5"/>
<dbReference type="KEGG" id="aeh:Mlg_0458"/>
<dbReference type="eggNOG" id="COG0087">
    <property type="taxonomic scope" value="Bacteria"/>
</dbReference>
<dbReference type="HOGENOM" id="CLU_044142_4_1_6"/>
<dbReference type="OrthoDB" id="9806135at2"/>
<dbReference type="Proteomes" id="UP000001962">
    <property type="component" value="Chromosome"/>
</dbReference>
<dbReference type="GO" id="GO:0022625">
    <property type="term" value="C:cytosolic large ribosomal subunit"/>
    <property type="evidence" value="ECO:0007669"/>
    <property type="project" value="TreeGrafter"/>
</dbReference>
<dbReference type="GO" id="GO:0019843">
    <property type="term" value="F:rRNA binding"/>
    <property type="evidence" value="ECO:0007669"/>
    <property type="project" value="UniProtKB-UniRule"/>
</dbReference>
<dbReference type="GO" id="GO:0003735">
    <property type="term" value="F:structural constituent of ribosome"/>
    <property type="evidence" value="ECO:0007669"/>
    <property type="project" value="InterPro"/>
</dbReference>
<dbReference type="GO" id="GO:0006412">
    <property type="term" value="P:translation"/>
    <property type="evidence" value="ECO:0007669"/>
    <property type="project" value="UniProtKB-UniRule"/>
</dbReference>
<dbReference type="FunFam" id="2.40.30.10:FF:000004">
    <property type="entry name" value="50S ribosomal protein L3"/>
    <property type="match status" value="1"/>
</dbReference>
<dbReference type="FunFam" id="3.30.160.810:FF:000001">
    <property type="entry name" value="50S ribosomal protein L3"/>
    <property type="match status" value="1"/>
</dbReference>
<dbReference type="Gene3D" id="3.30.160.810">
    <property type="match status" value="1"/>
</dbReference>
<dbReference type="Gene3D" id="2.40.30.10">
    <property type="entry name" value="Translation factors"/>
    <property type="match status" value="1"/>
</dbReference>
<dbReference type="HAMAP" id="MF_01325_B">
    <property type="entry name" value="Ribosomal_uL3_B"/>
    <property type="match status" value="1"/>
</dbReference>
<dbReference type="InterPro" id="IPR000597">
    <property type="entry name" value="Ribosomal_uL3"/>
</dbReference>
<dbReference type="InterPro" id="IPR019927">
    <property type="entry name" value="Ribosomal_uL3_bac/org-type"/>
</dbReference>
<dbReference type="InterPro" id="IPR019926">
    <property type="entry name" value="Ribosomal_uL3_CS"/>
</dbReference>
<dbReference type="InterPro" id="IPR009000">
    <property type="entry name" value="Transl_B-barrel_sf"/>
</dbReference>
<dbReference type="NCBIfam" id="TIGR03625">
    <property type="entry name" value="L3_bact"/>
    <property type="match status" value="1"/>
</dbReference>
<dbReference type="PANTHER" id="PTHR11229">
    <property type="entry name" value="50S RIBOSOMAL PROTEIN L3"/>
    <property type="match status" value="1"/>
</dbReference>
<dbReference type="PANTHER" id="PTHR11229:SF16">
    <property type="entry name" value="LARGE RIBOSOMAL SUBUNIT PROTEIN UL3C"/>
    <property type="match status" value="1"/>
</dbReference>
<dbReference type="Pfam" id="PF00297">
    <property type="entry name" value="Ribosomal_L3"/>
    <property type="match status" value="1"/>
</dbReference>
<dbReference type="SUPFAM" id="SSF50447">
    <property type="entry name" value="Translation proteins"/>
    <property type="match status" value="1"/>
</dbReference>
<dbReference type="PROSITE" id="PS00474">
    <property type="entry name" value="RIBOSOMAL_L3"/>
    <property type="match status" value="1"/>
</dbReference>